<feature type="chain" id="PRO_0000061581" description="Cytochrome b">
    <location>
        <begin position="1"/>
        <end position="379"/>
    </location>
</feature>
<feature type="transmembrane region" description="Helical" evidence="2">
    <location>
        <begin position="33"/>
        <end position="53"/>
    </location>
</feature>
<feature type="transmembrane region" description="Helical" evidence="2">
    <location>
        <begin position="77"/>
        <end position="98"/>
    </location>
</feature>
<feature type="transmembrane region" description="Helical" evidence="2">
    <location>
        <begin position="113"/>
        <end position="133"/>
    </location>
</feature>
<feature type="transmembrane region" description="Helical" evidence="2">
    <location>
        <begin position="178"/>
        <end position="198"/>
    </location>
</feature>
<feature type="transmembrane region" description="Helical" evidence="2">
    <location>
        <begin position="226"/>
        <end position="246"/>
    </location>
</feature>
<feature type="transmembrane region" description="Helical" evidence="2">
    <location>
        <begin position="288"/>
        <end position="308"/>
    </location>
</feature>
<feature type="transmembrane region" description="Helical" evidence="2">
    <location>
        <begin position="320"/>
        <end position="340"/>
    </location>
</feature>
<feature type="transmembrane region" description="Helical" evidence="2">
    <location>
        <begin position="347"/>
        <end position="367"/>
    </location>
</feature>
<feature type="binding site" description="axial binding residue" evidence="2">
    <location>
        <position position="83"/>
    </location>
    <ligand>
        <name>heme b</name>
        <dbReference type="ChEBI" id="CHEBI:60344"/>
        <label>b562</label>
    </ligand>
    <ligandPart>
        <name>Fe</name>
        <dbReference type="ChEBI" id="CHEBI:18248"/>
    </ligandPart>
</feature>
<feature type="binding site" description="axial binding residue" evidence="2">
    <location>
        <position position="97"/>
    </location>
    <ligand>
        <name>heme b</name>
        <dbReference type="ChEBI" id="CHEBI:60344"/>
        <label>b566</label>
    </ligand>
    <ligandPart>
        <name>Fe</name>
        <dbReference type="ChEBI" id="CHEBI:18248"/>
    </ligandPart>
</feature>
<feature type="binding site" description="axial binding residue" evidence="2">
    <location>
        <position position="182"/>
    </location>
    <ligand>
        <name>heme b</name>
        <dbReference type="ChEBI" id="CHEBI:60344"/>
        <label>b562</label>
    </ligand>
    <ligandPart>
        <name>Fe</name>
        <dbReference type="ChEBI" id="CHEBI:18248"/>
    </ligandPart>
</feature>
<feature type="binding site" description="axial binding residue" evidence="2">
    <location>
        <position position="196"/>
    </location>
    <ligand>
        <name>heme b</name>
        <dbReference type="ChEBI" id="CHEBI:60344"/>
        <label>b566</label>
    </ligand>
    <ligandPart>
        <name>Fe</name>
        <dbReference type="ChEBI" id="CHEBI:18248"/>
    </ligandPart>
</feature>
<feature type="binding site" evidence="2">
    <location>
        <position position="201"/>
    </location>
    <ligand>
        <name>a ubiquinone</name>
        <dbReference type="ChEBI" id="CHEBI:16389"/>
    </ligand>
</feature>
<protein>
    <recommendedName>
        <fullName>Cytochrome b</fullName>
    </recommendedName>
    <alternativeName>
        <fullName>Complex III subunit 3</fullName>
    </alternativeName>
    <alternativeName>
        <fullName>Complex III subunit III</fullName>
    </alternativeName>
    <alternativeName>
        <fullName>Cytochrome b-c1 complex subunit 3</fullName>
    </alternativeName>
    <alternativeName>
        <fullName>Ubiquinol-cytochrome-c reductase complex cytochrome b subunit</fullName>
    </alternativeName>
</protein>
<evidence type="ECO:0000250" key="1"/>
<evidence type="ECO:0000250" key="2">
    <source>
        <dbReference type="UniProtKB" id="P00157"/>
    </source>
</evidence>
<evidence type="ECO:0000255" key="3">
    <source>
        <dbReference type="PROSITE-ProRule" id="PRU00967"/>
    </source>
</evidence>
<evidence type="ECO:0000255" key="4">
    <source>
        <dbReference type="PROSITE-ProRule" id="PRU00968"/>
    </source>
</evidence>
<reference key="1">
    <citation type="submission" date="2002-10" db="EMBL/GenBank/DDBJ databases">
        <authorList>
            <person name="Fumagalli L."/>
        </authorList>
    </citation>
    <scope>NUCLEOTIDE SEQUENCE [GENOMIC DNA]</scope>
</reference>
<reference key="2">
    <citation type="journal article" date="1999" name="Mol. Phylogenet. Evol.">
        <title>Molecular phylogeny and evolution of Sorex shrews (Soricidae: Insectivora) inferred from mitochondrial DNA sequence data.</title>
        <authorList>
            <person name="Fumagalli L."/>
            <person name="Taberlet P."/>
            <person name="Stewart D.T."/>
            <person name="Gielly L."/>
            <person name="Hausser J."/>
            <person name="Vogel P."/>
        </authorList>
    </citation>
    <scope>NUCLEOTIDE SEQUENCE [GENOMIC DNA] OF 44-379</scope>
</reference>
<keyword id="KW-0249">Electron transport</keyword>
<keyword id="KW-0349">Heme</keyword>
<keyword id="KW-0408">Iron</keyword>
<keyword id="KW-0472">Membrane</keyword>
<keyword id="KW-0479">Metal-binding</keyword>
<keyword id="KW-0496">Mitochondrion</keyword>
<keyword id="KW-0999">Mitochondrion inner membrane</keyword>
<keyword id="KW-0679">Respiratory chain</keyword>
<keyword id="KW-0812">Transmembrane</keyword>
<keyword id="KW-1133">Transmembrane helix</keyword>
<keyword id="KW-0813">Transport</keyword>
<keyword id="KW-0830">Ubiquinone</keyword>
<accession>O79967</accession>
<sequence length="379" mass="42671">MTNLRKTHPLMKIVNSSFIDLPAPSNISSWWNFGSLLGVCLIIQILTGLFLAMHYTSDTMTAFSSVTHICRDVNYGWLIRYLHANGASMFFICLFLHVGRGLYYGSYMYLETWNIGVLLLFAVMATAFMGYVLPWGQMSFWGATVITNLLSAIPYIGSDLVEWIWGGFSVDKATLTRFFAFHFILPFIIAALAGVHLLFLHETGSNNPSGLSSDADKIPFHPYYTIKDILGVLLLILILTSLVLFSPDLLGDPDNYTPANPLNTPPHIKPEWYFLFAYAILRSIPNKLGGVLALVLSILILAMVPFLHTSKQRSMMFRPFSQCLFWILVADLLTLTWIGGQPVEHPFIIIGQLASILYFLLILVIMPITSLFENNLLKW</sequence>
<organism>
    <name type="scientific">Sorex samniticus</name>
    <name type="common">Apennine shrew</name>
    <dbReference type="NCBI Taxonomy" id="62899"/>
    <lineage>
        <taxon>Eukaryota</taxon>
        <taxon>Metazoa</taxon>
        <taxon>Chordata</taxon>
        <taxon>Craniata</taxon>
        <taxon>Vertebrata</taxon>
        <taxon>Euteleostomi</taxon>
        <taxon>Mammalia</taxon>
        <taxon>Eutheria</taxon>
        <taxon>Laurasiatheria</taxon>
        <taxon>Eulipotyphla</taxon>
        <taxon>Soricidae</taxon>
        <taxon>Soricinae</taxon>
        <taxon>Sorex</taxon>
    </lineage>
</organism>
<comment type="function">
    <text evidence="2">Component of the ubiquinol-cytochrome c reductase complex (complex III or cytochrome b-c1 complex) that is part of the mitochondrial respiratory chain. The b-c1 complex mediates electron transfer from ubiquinol to cytochrome c. Contributes to the generation of a proton gradient across the mitochondrial membrane that is then used for ATP synthesis.</text>
</comment>
<comment type="cofactor">
    <cofactor evidence="2">
        <name>heme b</name>
        <dbReference type="ChEBI" id="CHEBI:60344"/>
    </cofactor>
    <text evidence="2">Binds 2 heme b groups non-covalently.</text>
</comment>
<comment type="subunit">
    <text evidence="2">The cytochrome bc1 complex contains 11 subunits: 3 respiratory subunits (MT-CYB, CYC1 and UQCRFS1), 2 core proteins (UQCRC1 and UQCRC2) and 6 low-molecular weight proteins (UQCRH/QCR6, UQCRB/QCR7, UQCRQ/QCR8, UQCR10/QCR9, UQCR11/QCR10 and a cleavage product of UQCRFS1). This cytochrome bc1 complex then forms a dimer.</text>
</comment>
<comment type="subcellular location">
    <subcellularLocation>
        <location evidence="2">Mitochondrion inner membrane</location>
        <topology evidence="2">Multi-pass membrane protein</topology>
    </subcellularLocation>
</comment>
<comment type="miscellaneous">
    <text evidence="1">Heme 1 (or BL or b562) is low-potential and absorbs at about 562 nm, and heme 2 (or BH or b566) is high-potential and absorbs at about 566 nm.</text>
</comment>
<comment type="similarity">
    <text evidence="3 4">Belongs to the cytochrome b family.</text>
</comment>
<comment type="caution">
    <text evidence="2">The full-length protein contains only eight transmembrane helices, not nine as predicted by bioinformatics tools.</text>
</comment>
<proteinExistence type="inferred from homology"/>
<geneLocation type="mitochondrion"/>
<gene>
    <name type="primary">MT-CYB</name>
    <name type="synonym">COB</name>
    <name type="synonym">CYTB</name>
    <name type="synonym">MTCYB</name>
</gene>
<dbReference type="EMBL" id="AJ000429">
    <property type="protein sequence ID" value="CAA04074.2"/>
    <property type="molecule type" value="Genomic_DNA"/>
</dbReference>
<dbReference type="EMBL" id="AJ000430">
    <property type="protein sequence ID" value="CAA04075.1"/>
    <property type="molecule type" value="Genomic_DNA"/>
</dbReference>
<dbReference type="SMR" id="O79967"/>
<dbReference type="GO" id="GO:0005743">
    <property type="term" value="C:mitochondrial inner membrane"/>
    <property type="evidence" value="ECO:0007669"/>
    <property type="project" value="UniProtKB-SubCell"/>
</dbReference>
<dbReference type="GO" id="GO:0045275">
    <property type="term" value="C:respiratory chain complex III"/>
    <property type="evidence" value="ECO:0007669"/>
    <property type="project" value="InterPro"/>
</dbReference>
<dbReference type="GO" id="GO:0046872">
    <property type="term" value="F:metal ion binding"/>
    <property type="evidence" value="ECO:0007669"/>
    <property type="project" value="UniProtKB-KW"/>
</dbReference>
<dbReference type="GO" id="GO:0008121">
    <property type="term" value="F:ubiquinol-cytochrome-c reductase activity"/>
    <property type="evidence" value="ECO:0007669"/>
    <property type="project" value="InterPro"/>
</dbReference>
<dbReference type="GO" id="GO:0006122">
    <property type="term" value="P:mitochondrial electron transport, ubiquinol to cytochrome c"/>
    <property type="evidence" value="ECO:0007669"/>
    <property type="project" value="TreeGrafter"/>
</dbReference>
<dbReference type="CDD" id="cd00290">
    <property type="entry name" value="cytochrome_b_C"/>
    <property type="match status" value="1"/>
</dbReference>
<dbReference type="CDD" id="cd00284">
    <property type="entry name" value="Cytochrome_b_N"/>
    <property type="match status" value="1"/>
</dbReference>
<dbReference type="FunFam" id="1.20.810.10:FF:000002">
    <property type="entry name" value="Cytochrome b"/>
    <property type="match status" value="1"/>
</dbReference>
<dbReference type="Gene3D" id="1.20.810.10">
    <property type="entry name" value="Cytochrome Bc1 Complex, Chain C"/>
    <property type="match status" value="1"/>
</dbReference>
<dbReference type="InterPro" id="IPR005798">
    <property type="entry name" value="Cyt_b/b6_C"/>
</dbReference>
<dbReference type="InterPro" id="IPR036150">
    <property type="entry name" value="Cyt_b/b6_C_sf"/>
</dbReference>
<dbReference type="InterPro" id="IPR005797">
    <property type="entry name" value="Cyt_b/b6_N"/>
</dbReference>
<dbReference type="InterPro" id="IPR027387">
    <property type="entry name" value="Cytb/b6-like_sf"/>
</dbReference>
<dbReference type="InterPro" id="IPR030689">
    <property type="entry name" value="Cytochrome_b"/>
</dbReference>
<dbReference type="InterPro" id="IPR048260">
    <property type="entry name" value="Cytochrome_b_C_euk/bac"/>
</dbReference>
<dbReference type="InterPro" id="IPR048259">
    <property type="entry name" value="Cytochrome_b_N_euk/bac"/>
</dbReference>
<dbReference type="InterPro" id="IPR016174">
    <property type="entry name" value="Di-haem_cyt_TM"/>
</dbReference>
<dbReference type="PANTHER" id="PTHR19271">
    <property type="entry name" value="CYTOCHROME B"/>
    <property type="match status" value="1"/>
</dbReference>
<dbReference type="PANTHER" id="PTHR19271:SF16">
    <property type="entry name" value="CYTOCHROME B"/>
    <property type="match status" value="1"/>
</dbReference>
<dbReference type="Pfam" id="PF00032">
    <property type="entry name" value="Cytochrom_B_C"/>
    <property type="match status" value="1"/>
</dbReference>
<dbReference type="Pfam" id="PF00033">
    <property type="entry name" value="Cytochrome_B"/>
    <property type="match status" value="1"/>
</dbReference>
<dbReference type="PIRSF" id="PIRSF038885">
    <property type="entry name" value="COB"/>
    <property type="match status" value="1"/>
</dbReference>
<dbReference type="SUPFAM" id="SSF81648">
    <property type="entry name" value="a domain/subunit of cytochrome bc1 complex (Ubiquinol-cytochrome c reductase)"/>
    <property type="match status" value="1"/>
</dbReference>
<dbReference type="SUPFAM" id="SSF81342">
    <property type="entry name" value="Transmembrane di-heme cytochromes"/>
    <property type="match status" value="1"/>
</dbReference>
<dbReference type="PROSITE" id="PS51003">
    <property type="entry name" value="CYTB_CTER"/>
    <property type="match status" value="1"/>
</dbReference>
<dbReference type="PROSITE" id="PS51002">
    <property type="entry name" value="CYTB_NTER"/>
    <property type="match status" value="1"/>
</dbReference>
<name>CYB_SORSM</name>